<organism>
    <name type="scientific">Klebsiella pneumoniae (strain 342)</name>
    <dbReference type="NCBI Taxonomy" id="507522"/>
    <lineage>
        <taxon>Bacteria</taxon>
        <taxon>Pseudomonadati</taxon>
        <taxon>Pseudomonadota</taxon>
        <taxon>Gammaproteobacteria</taxon>
        <taxon>Enterobacterales</taxon>
        <taxon>Enterobacteriaceae</taxon>
        <taxon>Klebsiella/Raoultella group</taxon>
        <taxon>Klebsiella</taxon>
        <taxon>Klebsiella pneumoniae complex</taxon>
    </lineage>
</organism>
<gene>
    <name evidence="1" type="primary">secA</name>
    <name type="ordered locus">KPK_4639</name>
</gene>
<dbReference type="EC" id="7.4.2.8" evidence="1"/>
<dbReference type="EMBL" id="CP000964">
    <property type="protein sequence ID" value="ACI10966.1"/>
    <property type="molecule type" value="Genomic_DNA"/>
</dbReference>
<dbReference type="SMR" id="B5Y1T9"/>
<dbReference type="KEGG" id="kpe:KPK_4639"/>
<dbReference type="HOGENOM" id="CLU_005314_3_0_6"/>
<dbReference type="Proteomes" id="UP000001734">
    <property type="component" value="Chromosome"/>
</dbReference>
<dbReference type="GO" id="GO:0031522">
    <property type="term" value="C:cell envelope Sec protein transport complex"/>
    <property type="evidence" value="ECO:0007669"/>
    <property type="project" value="TreeGrafter"/>
</dbReference>
<dbReference type="GO" id="GO:0005829">
    <property type="term" value="C:cytosol"/>
    <property type="evidence" value="ECO:0007669"/>
    <property type="project" value="TreeGrafter"/>
</dbReference>
<dbReference type="GO" id="GO:0005886">
    <property type="term" value="C:plasma membrane"/>
    <property type="evidence" value="ECO:0007669"/>
    <property type="project" value="UniProtKB-SubCell"/>
</dbReference>
<dbReference type="GO" id="GO:0005524">
    <property type="term" value="F:ATP binding"/>
    <property type="evidence" value="ECO:0007669"/>
    <property type="project" value="UniProtKB-UniRule"/>
</dbReference>
<dbReference type="GO" id="GO:0046872">
    <property type="term" value="F:metal ion binding"/>
    <property type="evidence" value="ECO:0007669"/>
    <property type="project" value="UniProtKB-KW"/>
</dbReference>
<dbReference type="GO" id="GO:0008564">
    <property type="term" value="F:protein-exporting ATPase activity"/>
    <property type="evidence" value="ECO:0007669"/>
    <property type="project" value="UniProtKB-EC"/>
</dbReference>
<dbReference type="GO" id="GO:0065002">
    <property type="term" value="P:intracellular protein transmembrane transport"/>
    <property type="evidence" value="ECO:0007669"/>
    <property type="project" value="UniProtKB-UniRule"/>
</dbReference>
<dbReference type="GO" id="GO:0017038">
    <property type="term" value="P:protein import"/>
    <property type="evidence" value="ECO:0007669"/>
    <property type="project" value="InterPro"/>
</dbReference>
<dbReference type="GO" id="GO:0006605">
    <property type="term" value="P:protein targeting"/>
    <property type="evidence" value="ECO:0007669"/>
    <property type="project" value="UniProtKB-UniRule"/>
</dbReference>
<dbReference type="GO" id="GO:0043952">
    <property type="term" value="P:protein transport by the Sec complex"/>
    <property type="evidence" value="ECO:0007669"/>
    <property type="project" value="TreeGrafter"/>
</dbReference>
<dbReference type="CDD" id="cd17928">
    <property type="entry name" value="DEXDc_SecA"/>
    <property type="match status" value="1"/>
</dbReference>
<dbReference type="CDD" id="cd18803">
    <property type="entry name" value="SF2_C_secA"/>
    <property type="match status" value="1"/>
</dbReference>
<dbReference type="FunFam" id="1.10.3060.10:FF:000001">
    <property type="entry name" value="Preprotein translocase subunit SecA"/>
    <property type="match status" value="1"/>
</dbReference>
<dbReference type="FunFam" id="3.40.50.300:FF:000081">
    <property type="entry name" value="Preprotein translocase subunit SecA"/>
    <property type="match status" value="1"/>
</dbReference>
<dbReference type="FunFam" id="3.40.50.300:FF:000113">
    <property type="entry name" value="Preprotein translocase subunit SecA"/>
    <property type="match status" value="1"/>
</dbReference>
<dbReference type="FunFam" id="3.90.1440.10:FF:000001">
    <property type="entry name" value="Preprotein translocase subunit SecA"/>
    <property type="match status" value="1"/>
</dbReference>
<dbReference type="Gene3D" id="1.10.3060.10">
    <property type="entry name" value="Helical scaffold and wing domains of SecA"/>
    <property type="match status" value="1"/>
</dbReference>
<dbReference type="Gene3D" id="3.40.50.300">
    <property type="entry name" value="P-loop containing nucleotide triphosphate hydrolases"/>
    <property type="match status" value="2"/>
</dbReference>
<dbReference type="Gene3D" id="3.90.1440.10">
    <property type="entry name" value="SecA, preprotein cross-linking domain"/>
    <property type="match status" value="1"/>
</dbReference>
<dbReference type="HAMAP" id="MF_01382">
    <property type="entry name" value="SecA"/>
    <property type="match status" value="1"/>
</dbReference>
<dbReference type="InterPro" id="IPR014001">
    <property type="entry name" value="Helicase_ATP-bd"/>
</dbReference>
<dbReference type="InterPro" id="IPR001650">
    <property type="entry name" value="Helicase_C-like"/>
</dbReference>
<dbReference type="InterPro" id="IPR027417">
    <property type="entry name" value="P-loop_NTPase"/>
</dbReference>
<dbReference type="InterPro" id="IPR004027">
    <property type="entry name" value="SEC_C_motif"/>
</dbReference>
<dbReference type="InterPro" id="IPR000185">
    <property type="entry name" value="SecA"/>
</dbReference>
<dbReference type="InterPro" id="IPR020937">
    <property type="entry name" value="SecA_CS"/>
</dbReference>
<dbReference type="InterPro" id="IPR011115">
    <property type="entry name" value="SecA_DEAD"/>
</dbReference>
<dbReference type="InterPro" id="IPR014018">
    <property type="entry name" value="SecA_motor_DEAD"/>
</dbReference>
<dbReference type="InterPro" id="IPR011130">
    <property type="entry name" value="SecA_preprotein_X-link_dom"/>
</dbReference>
<dbReference type="InterPro" id="IPR044722">
    <property type="entry name" value="SecA_SF2_C"/>
</dbReference>
<dbReference type="InterPro" id="IPR011116">
    <property type="entry name" value="SecA_Wing/Scaffold"/>
</dbReference>
<dbReference type="InterPro" id="IPR036266">
    <property type="entry name" value="SecA_Wing/Scaffold_sf"/>
</dbReference>
<dbReference type="InterPro" id="IPR036670">
    <property type="entry name" value="SecA_X-link_sf"/>
</dbReference>
<dbReference type="NCBIfam" id="NF009538">
    <property type="entry name" value="PRK12904.1"/>
    <property type="match status" value="1"/>
</dbReference>
<dbReference type="NCBIfam" id="TIGR00963">
    <property type="entry name" value="secA"/>
    <property type="match status" value="1"/>
</dbReference>
<dbReference type="PANTHER" id="PTHR30612:SF0">
    <property type="entry name" value="CHLOROPLAST PROTEIN-TRANSPORTING ATPASE"/>
    <property type="match status" value="1"/>
</dbReference>
<dbReference type="PANTHER" id="PTHR30612">
    <property type="entry name" value="SECA INNER MEMBRANE COMPONENT OF SEC PROTEIN SECRETION SYSTEM"/>
    <property type="match status" value="1"/>
</dbReference>
<dbReference type="Pfam" id="PF21090">
    <property type="entry name" value="P-loop_SecA"/>
    <property type="match status" value="1"/>
</dbReference>
<dbReference type="Pfam" id="PF02810">
    <property type="entry name" value="SEC-C"/>
    <property type="match status" value="1"/>
</dbReference>
<dbReference type="Pfam" id="PF07517">
    <property type="entry name" value="SecA_DEAD"/>
    <property type="match status" value="1"/>
</dbReference>
<dbReference type="Pfam" id="PF01043">
    <property type="entry name" value="SecA_PP_bind"/>
    <property type="match status" value="1"/>
</dbReference>
<dbReference type="Pfam" id="PF07516">
    <property type="entry name" value="SecA_SW"/>
    <property type="match status" value="1"/>
</dbReference>
<dbReference type="PRINTS" id="PR00906">
    <property type="entry name" value="SECA"/>
</dbReference>
<dbReference type="SMART" id="SM00957">
    <property type="entry name" value="SecA_DEAD"/>
    <property type="match status" value="1"/>
</dbReference>
<dbReference type="SMART" id="SM00958">
    <property type="entry name" value="SecA_PP_bind"/>
    <property type="match status" value="1"/>
</dbReference>
<dbReference type="SUPFAM" id="SSF81886">
    <property type="entry name" value="Helical scaffold and wing domains of SecA"/>
    <property type="match status" value="1"/>
</dbReference>
<dbReference type="SUPFAM" id="SSF52540">
    <property type="entry name" value="P-loop containing nucleoside triphosphate hydrolases"/>
    <property type="match status" value="2"/>
</dbReference>
<dbReference type="SUPFAM" id="SSF81767">
    <property type="entry name" value="Pre-protein crosslinking domain of SecA"/>
    <property type="match status" value="1"/>
</dbReference>
<dbReference type="PROSITE" id="PS01312">
    <property type="entry name" value="SECA"/>
    <property type="match status" value="1"/>
</dbReference>
<dbReference type="PROSITE" id="PS51196">
    <property type="entry name" value="SECA_MOTOR_DEAD"/>
    <property type="match status" value="1"/>
</dbReference>
<name>SECA_KLEP3</name>
<reference key="1">
    <citation type="journal article" date="2008" name="PLoS Genet.">
        <title>Complete genome sequence of the N2-fixing broad host range endophyte Klebsiella pneumoniae 342 and virulence predictions verified in mice.</title>
        <authorList>
            <person name="Fouts D.E."/>
            <person name="Tyler H.L."/>
            <person name="DeBoy R.T."/>
            <person name="Daugherty S."/>
            <person name="Ren Q."/>
            <person name="Badger J.H."/>
            <person name="Durkin A.S."/>
            <person name="Huot H."/>
            <person name="Shrivastava S."/>
            <person name="Kothari S."/>
            <person name="Dodson R.J."/>
            <person name="Mohamoud Y."/>
            <person name="Khouri H."/>
            <person name="Roesch L.F.W."/>
            <person name="Krogfelt K.A."/>
            <person name="Struve C."/>
            <person name="Triplett E.W."/>
            <person name="Methe B.A."/>
        </authorList>
    </citation>
    <scope>NUCLEOTIDE SEQUENCE [LARGE SCALE GENOMIC DNA]</scope>
    <source>
        <strain>342</strain>
    </source>
</reference>
<feature type="chain" id="PRO_1000145025" description="Protein translocase subunit SecA">
    <location>
        <begin position="1"/>
        <end position="901"/>
    </location>
</feature>
<feature type="region of interest" description="Disordered" evidence="2">
    <location>
        <begin position="852"/>
        <end position="901"/>
    </location>
</feature>
<feature type="compositionally biased region" description="Basic residues" evidence="2">
    <location>
        <begin position="891"/>
        <end position="901"/>
    </location>
</feature>
<feature type="binding site" evidence="1">
    <location>
        <position position="87"/>
    </location>
    <ligand>
        <name>ATP</name>
        <dbReference type="ChEBI" id="CHEBI:30616"/>
    </ligand>
</feature>
<feature type="binding site" evidence="1">
    <location>
        <begin position="105"/>
        <end position="109"/>
    </location>
    <ligand>
        <name>ATP</name>
        <dbReference type="ChEBI" id="CHEBI:30616"/>
    </ligand>
</feature>
<feature type="binding site" evidence="1">
    <location>
        <position position="512"/>
    </location>
    <ligand>
        <name>ATP</name>
        <dbReference type="ChEBI" id="CHEBI:30616"/>
    </ligand>
</feature>
<feature type="binding site" evidence="1">
    <location>
        <position position="885"/>
    </location>
    <ligand>
        <name>Zn(2+)</name>
        <dbReference type="ChEBI" id="CHEBI:29105"/>
    </ligand>
</feature>
<feature type="binding site" evidence="1">
    <location>
        <position position="887"/>
    </location>
    <ligand>
        <name>Zn(2+)</name>
        <dbReference type="ChEBI" id="CHEBI:29105"/>
    </ligand>
</feature>
<feature type="binding site" evidence="1">
    <location>
        <position position="896"/>
    </location>
    <ligand>
        <name>Zn(2+)</name>
        <dbReference type="ChEBI" id="CHEBI:29105"/>
    </ligand>
</feature>
<feature type="binding site" evidence="1">
    <location>
        <position position="897"/>
    </location>
    <ligand>
        <name>Zn(2+)</name>
        <dbReference type="ChEBI" id="CHEBI:29105"/>
    </ligand>
</feature>
<accession>B5Y1T9</accession>
<proteinExistence type="inferred from homology"/>
<comment type="function">
    <text evidence="1">Part of the Sec protein translocase complex. Interacts with the SecYEG preprotein conducting channel. Has a central role in coupling the hydrolysis of ATP to the transfer of proteins into and across the cell membrane, serving both as a receptor for the preprotein-SecB complex and as an ATP-driven molecular motor driving the stepwise translocation of polypeptide chains across the membrane.</text>
</comment>
<comment type="catalytic activity">
    <reaction evidence="1">
        <text>ATP + H2O + cellular proteinSide 1 = ADP + phosphate + cellular proteinSide 2.</text>
        <dbReference type="EC" id="7.4.2.8"/>
    </reaction>
</comment>
<comment type="cofactor">
    <cofactor evidence="1">
        <name>Zn(2+)</name>
        <dbReference type="ChEBI" id="CHEBI:29105"/>
    </cofactor>
    <text evidence="1">May bind 1 zinc ion per subunit.</text>
</comment>
<comment type="subunit">
    <text evidence="1">Monomer and homodimer. Part of the essential Sec protein translocation apparatus which comprises SecA, SecYEG and auxiliary proteins SecDF-YajC and YidC.</text>
</comment>
<comment type="subcellular location">
    <subcellularLocation>
        <location evidence="1">Cell inner membrane</location>
        <topology evidence="1">Peripheral membrane protein</topology>
        <orientation evidence="1">Cytoplasmic side</orientation>
    </subcellularLocation>
    <subcellularLocation>
        <location evidence="1">Cytoplasm</location>
    </subcellularLocation>
    <text evidence="1">Distribution is 50-50.</text>
</comment>
<comment type="induction">
    <text evidence="1">Repressed under conditions of excess protein secretion capacity and derepressed when protein secretion becomes limiting. This is regulated by SecM.</text>
</comment>
<comment type="similarity">
    <text evidence="1">Belongs to the SecA family.</text>
</comment>
<sequence>MLIKMLTKVFGSRNDRTLRRMRKVVNIINGMEPAMEKLSDDELKAKTAEFRARLEKGEVLENLIPEAFAVVREASKRVFGMRHFDVQLLGGMVLNDRCIAEMRTGEGKTLTATLPAYLNALTGKGVHVVTVNDYLAQRDAENNRPLFEFLGMSVGINMSGLPAPAKREAYAADITYGTNNEYGFDYLRDNMAFSPEERVQRKLHYALVDEVDSILIDEARTPLIISGPAEDSSEMYRKVNKIIPHLIRQEKEDSDTFTGEGHFSVDEKARQVNLTERGLVLIEELLVQEGIMEEGESLYSPTNIMLMHHVTAALRAHALFTRDVDYIVKDGEVIIVDEHTGRTMQGRRWSDGLHQAVEAKEGVEIQNENQTLASITFQNYFRLYEKLAGMTGTADTEAFEFSSIYKLDTVVVPTNRPMIRKDMADLVYMTEAEKIQAIIEDIKTRTAAGQPVLVGTISIEKSEVVSRELTKAGIKHNVLNAKFHASEADIVAQAGYPAAVTIATNMAGRGTDIMLGGSWQAEVAALENPTAEQIEKIKADWQVRHDAVLAAGGLHIIGTERHESRRIDNQLRGRAGRQGDAGSSRFYLSMEDALMRIFASDRVSGMMRKLGMKPGEAIEHPWVTKAIANAQRKVESRNFDIRKQLLEYDDVANDQRRAIYTQRNELLDVSDVSETINSIREDVFKATIDAHIPPQSLEEMWDIEGLQERLKNDFDLELPIKEWLDKEPELHEETLRERILQSAVETYQRKEEVVGAEMMRHFEKGVMLQTLDSLWKEHLAAMDYLRQGIHLRGYAQKDPKQEYKRESFSMFAAMLESLKYEVISTLSKVQVRMPEEVEAMEQQRREEAERLAQMQQLSHQSDDEAAAEDLAAQTGERKVGRNDPCPCGSGKKYKQCHGRLS</sequence>
<protein>
    <recommendedName>
        <fullName evidence="1">Protein translocase subunit SecA</fullName>
        <ecNumber evidence="1">7.4.2.8</ecNumber>
    </recommendedName>
</protein>
<evidence type="ECO:0000255" key="1">
    <source>
        <dbReference type="HAMAP-Rule" id="MF_01382"/>
    </source>
</evidence>
<evidence type="ECO:0000256" key="2">
    <source>
        <dbReference type="SAM" id="MobiDB-lite"/>
    </source>
</evidence>
<keyword id="KW-0067">ATP-binding</keyword>
<keyword id="KW-0997">Cell inner membrane</keyword>
<keyword id="KW-1003">Cell membrane</keyword>
<keyword id="KW-0963">Cytoplasm</keyword>
<keyword id="KW-0472">Membrane</keyword>
<keyword id="KW-0479">Metal-binding</keyword>
<keyword id="KW-0547">Nucleotide-binding</keyword>
<keyword id="KW-0653">Protein transport</keyword>
<keyword id="KW-1278">Translocase</keyword>
<keyword id="KW-0811">Translocation</keyword>
<keyword id="KW-0813">Transport</keyword>
<keyword id="KW-0862">Zinc</keyword>